<proteinExistence type="inferred from homology"/>
<protein>
    <recommendedName>
        <fullName evidence="2">Large ribosomal subunit protein uL24</fullName>
    </recommendedName>
    <alternativeName>
        <fullName>50S ribosomal protein L24</fullName>
    </alternativeName>
</protein>
<evidence type="ECO:0000250" key="1"/>
<evidence type="ECO:0000305" key="2"/>
<reference key="1">
    <citation type="journal article" date="2002" name="J. Bacteriol.">
        <title>Genome sequence and analysis of the oral bacterium Fusobacterium nucleatum strain ATCC 25586.</title>
        <authorList>
            <person name="Kapatral V."/>
            <person name="Anderson I."/>
            <person name="Ivanova N."/>
            <person name="Reznik G."/>
            <person name="Los T."/>
            <person name="Lykidis A."/>
            <person name="Bhattacharyya A."/>
            <person name="Bartman A."/>
            <person name="Gardner W."/>
            <person name="Grechkin G."/>
            <person name="Zhu L."/>
            <person name="Vasieva O."/>
            <person name="Chu L."/>
            <person name="Kogan Y."/>
            <person name="Chaga O."/>
            <person name="Goltsman E."/>
            <person name="Bernal A."/>
            <person name="Larsen N."/>
            <person name="D'Souza M."/>
            <person name="Walunas T."/>
            <person name="Pusch G."/>
            <person name="Haselkorn R."/>
            <person name="Fonstein M."/>
            <person name="Kyrpides N.C."/>
            <person name="Overbeek R."/>
        </authorList>
    </citation>
    <scope>NUCLEOTIDE SEQUENCE [LARGE SCALE GENOMIC DNA]</scope>
    <source>
        <strain>ATCC 25586 / DSM 15643 / BCRC 10681 / CIP 101130 / JCM 8532 / KCTC 2640 / LMG 13131 / VPI 4355</strain>
    </source>
</reference>
<feature type="chain" id="PRO_0000130658" description="Large ribosomal subunit protein uL24">
    <location>
        <begin position="1"/>
        <end position="113"/>
    </location>
</feature>
<sequence>MAKPKIKFVPDSLHVKTGDIVYVISGKDKKMTGKVLKVFPKKGKIIVEGINIVTKHLKPSQVNPQGGVVQKEAAIFSSKVMLFDEKTKSPTRVGYEVRDGKKVRISKKSGEII</sequence>
<accession>Q8RIG6</accession>
<accession>Q8RIG7</accession>
<gene>
    <name type="primary">rplX</name>
    <name type="ordered locus">FN1634</name>
</gene>
<keyword id="KW-1185">Reference proteome</keyword>
<keyword id="KW-0687">Ribonucleoprotein</keyword>
<keyword id="KW-0689">Ribosomal protein</keyword>
<keyword id="KW-0694">RNA-binding</keyword>
<keyword id="KW-0699">rRNA-binding</keyword>
<comment type="function">
    <text evidence="1">One of two assembly initiator proteins, it binds directly to the 5'-end of the 23S rRNA, where it nucleates assembly of the 50S subunit.</text>
</comment>
<comment type="function">
    <text evidence="1">One of the proteins that surrounds the polypeptide exit tunnel on the outside of the subunit.</text>
</comment>
<comment type="subunit">
    <text evidence="1">Part of the 50S ribosomal subunit.</text>
</comment>
<comment type="similarity">
    <text evidence="2">Belongs to the universal ribosomal protein uL24 family.</text>
</comment>
<comment type="sequence caution" evidence="2">
    <conflict type="erroneous termination">
        <sequence resource="EMBL-CDS" id="AAL93748"/>
    </conflict>
    <text>Truncated C-terminus.</text>
</comment>
<comment type="sequence caution" evidence="2">
    <conflict type="erroneous termination">
        <sequence resource="EMBL-CDS" id="AAL93749"/>
    </conflict>
    <text>Truncated C-terminus.</text>
</comment>
<name>RL24_FUSNN</name>
<organism>
    <name type="scientific">Fusobacterium nucleatum subsp. nucleatum (strain ATCC 25586 / DSM 15643 / BCRC 10681 / CIP 101130 / JCM 8532 / KCTC 2640 / LMG 13131 / VPI 4355)</name>
    <dbReference type="NCBI Taxonomy" id="190304"/>
    <lineage>
        <taxon>Bacteria</taxon>
        <taxon>Fusobacteriati</taxon>
        <taxon>Fusobacteriota</taxon>
        <taxon>Fusobacteriia</taxon>
        <taxon>Fusobacteriales</taxon>
        <taxon>Fusobacteriaceae</taxon>
        <taxon>Fusobacterium</taxon>
    </lineage>
</organism>
<dbReference type="EMBL" id="AE009951">
    <property type="protein sequence ID" value="AAL93748.1"/>
    <property type="status" value="ALT_SEQ"/>
    <property type="molecule type" value="Genomic_DNA"/>
</dbReference>
<dbReference type="EMBL" id="AE009951">
    <property type="protein sequence ID" value="AAL93749.1"/>
    <property type="status" value="ALT_SEQ"/>
    <property type="molecule type" value="Genomic_DNA"/>
</dbReference>
<dbReference type="RefSeq" id="NP_602449.1">
    <property type="nucleotide sequence ID" value="NC_003454.1"/>
</dbReference>
<dbReference type="RefSeq" id="NP_602450.1">
    <property type="nucleotide sequence ID" value="NC_003454.1"/>
</dbReference>
<dbReference type="SMR" id="Q8RIG6"/>
<dbReference type="FunCoup" id="Q8RIG6">
    <property type="interactions" value="364"/>
</dbReference>
<dbReference type="STRING" id="190304.FN1634"/>
<dbReference type="PaxDb" id="190304-FN1634"/>
<dbReference type="EnsemblBacteria" id="AAL93748">
    <property type="protein sequence ID" value="AAL93748"/>
    <property type="gene ID" value="FN1633"/>
</dbReference>
<dbReference type="EnsemblBacteria" id="AAL93749">
    <property type="protein sequence ID" value="AAL93749"/>
    <property type="gene ID" value="FN1634"/>
</dbReference>
<dbReference type="KEGG" id="fnu:FN1633"/>
<dbReference type="KEGG" id="fnu:FN1634"/>
<dbReference type="PATRIC" id="fig|190304.8.peg.127"/>
<dbReference type="HOGENOM" id="CLU_093315_4_1_0"/>
<dbReference type="InParanoid" id="Q8RIG6"/>
<dbReference type="Proteomes" id="UP000002521">
    <property type="component" value="Chromosome"/>
</dbReference>
<dbReference type="GO" id="GO:0022625">
    <property type="term" value="C:cytosolic large ribosomal subunit"/>
    <property type="evidence" value="ECO:0000318"/>
    <property type="project" value="GO_Central"/>
</dbReference>
<dbReference type="GO" id="GO:0019843">
    <property type="term" value="F:rRNA binding"/>
    <property type="evidence" value="ECO:0007669"/>
    <property type="project" value="UniProtKB-UniRule"/>
</dbReference>
<dbReference type="GO" id="GO:0003735">
    <property type="term" value="F:structural constituent of ribosome"/>
    <property type="evidence" value="ECO:0007669"/>
    <property type="project" value="InterPro"/>
</dbReference>
<dbReference type="GO" id="GO:0006412">
    <property type="term" value="P:translation"/>
    <property type="evidence" value="ECO:0000318"/>
    <property type="project" value="GO_Central"/>
</dbReference>
<dbReference type="CDD" id="cd06089">
    <property type="entry name" value="KOW_RPL26"/>
    <property type="match status" value="1"/>
</dbReference>
<dbReference type="FunFam" id="2.30.30.30:FF:000004">
    <property type="entry name" value="50S ribosomal protein L24"/>
    <property type="match status" value="1"/>
</dbReference>
<dbReference type="Gene3D" id="2.30.30.30">
    <property type="match status" value="1"/>
</dbReference>
<dbReference type="HAMAP" id="MF_01326_B">
    <property type="entry name" value="Ribosomal_uL24_B"/>
    <property type="match status" value="1"/>
</dbReference>
<dbReference type="InterPro" id="IPR005824">
    <property type="entry name" value="KOW"/>
</dbReference>
<dbReference type="InterPro" id="IPR014722">
    <property type="entry name" value="Rib_uL2_dom2"/>
</dbReference>
<dbReference type="InterPro" id="IPR003256">
    <property type="entry name" value="Ribosomal_uL24"/>
</dbReference>
<dbReference type="InterPro" id="IPR005825">
    <property type="entry name" value="Ribosomal_uL24_CS"/>
</dbReference>
<dbReference type="InterPro" id="IPR041988">
    <property type="entry name" value="Ribosomal_uL24_KOW"/>
</dbReference>
<dbReference type="InterPro" id="IPR008991">
    <property type="entry name" value="Translation_prot_SH3-like_sf"/>
</dbReference>
<dbReference type="NCBIfam" id="TIGR01079">
    <property type="entry name" value="rplX_bact"/>
    <property type="match status" value="1"/>
</dbReference>
<dbReference type="PANTHER" id="PTHR12903">
    <property type="entry name" value="MITOCHONDRIAL RIBOSOMAL PROTEIN L24"/>
    <property type="match status" value="1"/>
</dbReference>
<dbReference type="Pfam" id="PF00467">
    <property type="entry name" value="KOW"/>
    <property type="match status" value="1"/>
</dbReference>
<dbReference type="Pfam" id="PF17136">
    <property type="entry name" value="ribosomal_L24"/>
    <property type="match status" value="1"/>
</dbReference>
<dbReference type="SMART" id="SM00739">
    <property type="entry name" value="KOW"/>
    <property type="match status" value="1"/>
</dbReference>
<dbReference type="SUPFAM" id="SSF50104">
    <property type="entry name" value="Translation proteins SH3-like domain"/>
    <property type="match status" value="1"/>
</dbReference>
<dbReference type="PROSITE" id="PS01108">
    <property type="entry name" value="RIBOSOMAL_L24"/>
    <property type="match status" value="1"/>
</dbReference>